<evidence type="ECO:0000250" key="1">
    <source>
        <dbReference type="UniProtKB" id="K7IM66"/>
    </source>
</evidence>
<evidence type="ECO:0000255" key="2">
    <source>
        <dbReference type="HAMAP-Rule" id="MF_03003"/>
    </source>
</evidence>
<evidence type="ECO:0000256" key="3">
    <source>
        <dbReference type="SAM" id="MobiDB-lite"/>
    </source>
</evidence>
<dbReference type="EMBL" id="GG704911">
    <property type="protein sequence ID" value="EAS37016.1"/>
    <property type="molecule type" value="Genomic_DNA"/>
</dbReference>
<dbReference type="RefSeq" id="XP_001248599.1">
    <property type="nucleotide sequence ID" value="XM_001248598.2"/>
</dbReference>
<dbReference type="SMR" id="Q1E4Z3"/>
<dbReference type="STRING" id="246410.Q1E4Z3"/>
<dbReference type="GeneID" id="4565289"/>
<dbReference type="KEGG" id="cim:CIMG_02370"/>
<dbReference type="VEuPathDB" id="FungiDB:CIMG_02370"/>
<dbReference type="InParanoid" id="Q1E4Z3"/>
<dbReference type="OMA" id="FMDKRDN"/>
<dbReference type="OrthoDB" id="16538at2759"/>
<dbReference type="Proteomes" id="UP000001261">
    <property type="component" value="Unassembled WGS sequence"/>
</dbReference>
<dbReference type="GO" id="GO:0016282">
    <property type="term" value="C:eukaryotic 43S preinitiation complex"/>
    <property type="evidence" value="ECO:0007669"/>
    <property type="project" value="UniProtKB-UniRule"/>
</dbReference>
<dbReference type="GO" id="GO:0033290">
    <property type="term" value="C:eukaryotic 48S preinitiation complex"/>
    <property type="evidence" value="ECO:0007669"/>
    <property type="project" value="UniProtKB-UniRule"/>
</dbReference>
<dbReference type="GO" id="GO:0005852">
    <property type="term" value="C:eukaryotic translation initiation factor 3 complex"/>
    <property type="evidence" value="ECO:0007669"/>
    <property type="project" value="UniProtKB-UniRule"/>
</dbReference>
<dbReference type="GO" id="GO:0098808">
    <property type="term" value="F:mRNA cap binding"/>
    <property type="evidence" value="ECO:0007669"/>
    <property type="project" value="UniProtKB-UniRule"/>
</dbReference>
<dbReference type="GO" id="GO:0003743">
    <property type="term" value="F:translation initiation factor activity"/>
    <property type="evidence" value="ECO:0007669"/>
    <property type="project" value="UniProtKB-UniRule"/>
</dbReference>
<dbReference type="GO" id="GO:0002191">
    <property type="term" value="P:cap-dependent translational initiation"/>
    <property type="evidence" value="ECO:0007669"/>
    <property type="project" value="UniProtKB-UniRule"/>
</dbReference>
<dbReference type="GO" id="GO:0001732">
    <property type="term" value="P:formation of cytoplasmic translation initiation complex"/>
    <property type="evidence" value="ECO:0007669"/>
    <property type="project" value="UniProtKB-UniRule"/>
</dbReference>
<dbReference type="HAMAP" id="MF_03003">
    <property type="entry name" value="eIF3d"/>
    <property type="match status" value="1"/>
</dbReference>
<dbReference type="InterPro" id="IPR007783">
    <property type="entry name" value="eIF3d"/>
</dbReference>
<dbReference type="PANTHER" id="PTHR12399">
    <property type="entry name" value="EUKARYOTIC TRANSLATION INITIATION FACTOR 3 SUBUNIT 7"/>
    <property type="match status" value="1"/>
</dbReference>
<dbReference type="PANTHER" id="PTHR12399:SF0">
    <property type="entry name" value="EUKARYOTIC TRANSLATION INITIATION FACTOR 3 SUBUNIT D"/>
    <property type="match status" value="1"/>
</dbReference>
<dbReference type="Pfam" id="PF05091">
    <property type="entry name" value="eIF-3_zeta"/>
    <property type="match status" value="1"/>
</dbReference>
<dbReference type="PIRSF" id="PIRSF016281">
    <property type="entry name" value="EIF-3_zeta"/>
    <property type="match status" value="1"/>
</dbReference>
<accession>Q1E4Z3</accession>
<accession>A0A0D6K9Q6</accession>
<accession>J3KLK5</accession>
<sequence>MAPLSLTDIVSALPSEEDAWGPPVPTGNHLDGVPYAPFSKGDKLGRMADWGADSKDSRERGRQAYNRNYRDQQVYGAGTSSLFAVQVAEDESSFSVVDNTRTSVKTRGFGRGGGTIFRGRGQRGGAQRGRGGAFQRPAGGRGGQAGGDRYYDQRGGRGNRGRRFGWKDYDKPQRNRDSSVAIRPEWSMLEEIDFSRLSKLNLETPDGEDLDNYGFLYYYDRSYDKAPVKNTERRLRALERAAYNVTTSADPVIQELAEKDEATVFATADILSMLMCASRSVYSWDIVIVKHGNKIYFDKRDNASIDLVTVNENAADAPMEASEGQAKHDSINTPGALALEATIINHNFALQTVVESDSAKVEFSHPNPFYNPSEETEPLASKGFKYRRFDLSLEKDEEPVQIIVRTEIDAVLKNNISGEDQHVTLKALNEFDHKAQGAGGALDWRSKLYSQRGAVVATEMKNNNVKLARWTTQAILAKSDVMKLGFVTRANPRSATAHMILGVIGYKPREFALQMNLNMANGWGIVRTIIDLVNSLDARDEEEGDDAQEDKIKKYILVKDPNKSVVRLYSVPANTFEEEDDTGAKAEKDEESEEKDEE</sequence>
<reference key="1">
    <citation type="journal article" date="2009" name="Genome Res.">
        <title>Comparative genomic analyses of the human fungal pathogens Coccidioides and their relatives.</title>
        <authorList>
            <person name="Sharpton T.J."/>
            <person name="Stajich J.E."/>
            <person name="Rounsley S.D."/>
            <person name="Gardner M.J."/>
            <person name="Wortman J.R."/>
            <person name="Jordar V.S."/>
            <person name="Maiti R."/>
            <person name="Kodira C.D."/>
            <person name="Neafsey D.E."/>
            <person name="Zeng Q."/>
            <person name="Hung C.-Y."/>
            <person name="McMahan C."/>
            <person name="Muszewska A."/>
            <person name="Grynberg M."/>
            <person name="Mandel M.A."/>
            <person name="Kellner E.M."/>
            <person name="Barker B.M."/>
            <person name="Galgiani J.N."/>
            <person name="Orbach M.J."/>
            <person name="Kirkland T.N."/>
            <person name="Cole G.T."/>
            <person name="Henn M.R."/>
            <person name="Birren B.W."/>
            <person name="Taylor J.W."/>
        </authorList>
    </citation>
    <scope>NUCLEOTIDE SEQUENCE [LARGE SCALE GENOMIC DNA]</scope>
    <source>
        <strain>RS</strain>
    </source>
</reference>
<reference key="2">
    <citation type="journal article" date="2010" name="Genome Res.">
        <title>Population genomic sequencing of Coccidioides fungi reveals recent hybridization and transposon control.</title>
        <authorList>
            <person name="Neafsey D.E."/>
            <person name="Barker B.M."/>
            <person name="Sharpton T.J."/>
            <person name="Stajich J.E."/>
            <person name="Park D.J."/>
            <person name="Whiston E."/>
            <person name="Hung C.-Y."/>
            <person name="McMahan C."/>
            <person name="White J."/>
            <person name="Sykes S."/>
            <person name="Heiman D."/>
            <person name="Young S."/>
            <person name="Zeng Q."/>
            <person name="Abouelleil A."/>
            <person name="Aftuck L."/>
            <person name="Bessette D."/>
            <person name="Brown A."/>
            <person name="FitzGerald M."/>
            <person name="Lui A."/>
            <person name="Macdonald J.P."/>
            <person name="Priest M."/>
            <person name="Orbach M.J."/>
            <person name="Galgiani J.N."/>
            <person name="Kirkland T.N."/>
            <person name="Cole G.T."/>
            <person name="Birren B.W."/>
            <person name="Henn M.R."/>
            <person name="Taylor J.W."/>
            <person name="Rounsley S.D."/>
        </authorList>
    </citation>
    <scope>GENOME REANNOTATION</scope>
    <source>
        <strain>RS</strain>
    </source>
</reference>
<keyword id="KW-0963">Cytoplasm</keyword>
<keyword id="KW-0396">Initiation factor</keyword>
<keyword id="KW-0648">Protein biosynthesis</keyword>
<keyword id="KW-1185">Reference proteome</keyword>
<keyword id="KW-0694">RNA-binding</keyword>
<organism>
    <name type="scientific">Coccidioides immitis (strain RS)</name>
    <name type="common">Valley fever fungus</name>
    <dbReference type="NCBI Taxonomy" id="246410"/>
    <lineage>
        <taxon>Eukaryota</taxon>
        <taxon>Fungi</taxon>
        <taxon>Dikarya</taxon>
        <taxon>Ascomycota</taxon>
        <taxon>Pezizomycotina</taxon>
        <taxon>Eurotiomycetes</taxon>
        <taxon>Eurotiomycetidae</taxon>
        <taxon>Onygenales</taxon>
        <taxon>Onygenaceae</taxon>
        <taxon>Coccidioides</taxon>
    </lineage>
</organism>
<proteinExistence type="inferred from homology"/>
<comment type="function">
    <text evidence="2">mRNA cap-binding component of the eukaryotic translation initiation factor 3 (eIF-3) complex, which is involved in protein synthesis of a specialized repertoire of mRNAs and, together with other initiation factors, stimulates binding of mRNA and methionyl-tRNAi to the 40S ribosome. The eIF-3 complex specifically targets and initiates translation of a subset of mRNAs involved in cell proliferation. In the eIF-3 complex, eif3d specifically recognizes and binds the 7-methylguanosine cap of a subset of mRNAs.</text>
</comment>
<comment type="subunit">
    <text evidence="2">Component of the eukaryotic translation initiation factor 3 (eIF-3) complex.</text>
</comment>
<comment type="subcellular location">
    <subcellularLocation>
        <location evidence="2">Cytoplasm</location>
    </subcellularLocation>
</comment>
<comment type="domain">
    <text evidence="2">The RNA gate region regulates mRNA cap recognition to prevent promiscuous mRNA-binding before assembly of eif3d into the full eukaryotic translation initiation factor 3 (eIF-3) complex.</text>
</comment>
<comment type="similarity">
    <text evidence="2">Belongs to the eIF-3 subunit D family.</text>
</comment>
<gene>
    <name type="ORF">CIMG_02370</name>
</gene>
<name>EIF3D_COCIM</name>
<protein>
    <recommendedName>
        <fullName evidence="2">Eukaryotic translation initiation factor 3 subunit D</fullName>
        <shortName evidence="2">eIF3d</shortName>
    </recommendedName>
</protein>
<feature type="chain" id="PRO_0000364173" description="Eukaryotic translation initiation factor 3 subunit D">
    <location>
        <begin position="1"/>
        <end position="598"/>
    </location>
</feature>
<feature type="region of interest" description="Disordered" evidence="3">
    <location>
        <begin position="104"/>
        <end position="178"/>
    </location>
</feature>
<feature type="region of interest" description="RNA gate" evidence="1">
    <location>
        <begin position="304"/>
        <end position="318"/>
    </location>
</feature>
<feature type="region of interest" description="Disordered" evidence="3">
    <location>
        <begin position="574"/>
        <end position="598"/>
    </location>
</feature>
<feature type="compositionally biased region" description="Gly residues" evidence="3">
    <location>
        <begin position="109"/>
        <end position="132"/>
    </location>
</feature>
<feature type="compositionally biased region" description="Basic and acidic residues" evidence="3">
    <location>
        <begin position="165"/>
        <end position="177"/>
    </location>
</feature>
<feature type="compositionally biased region" description="Acidic residues" evidence="3">
    <location>
        <begin position="589"/>
        <end position="598"/>
    </location>
</feature>